<name>CLPS_ALISL</name>
<accession>B6EIX3</accession>
<comment type="function">
    <text evidence="1">Involved in the modulation of the specificity of the ClpAP-mediated ATP-dependent protein degradation.</text>
</comment>
<comment type="subunit">
    <text evidence="1">Binds to the N-terminal domain of the chaperone ClpA.</text>
</comment>
<comment type="similarity">
    <text evidence="1">Belongs to the ClpS family.</text>
</comment>
<feature type="chain" id="PRO_1000115443" description="ATP-dependent Clp protease adapter protein ClpS">
    <location>
        <begin position="1"/>
        <end position="106"/>
    </location>
</feature>
<protein>
    <recommendedName>
        <fullName evidence="1">ATP-dependent Clp protease adapter protein ClpS</fullName>
    </recommendedName>
</protein>
<dbReference type="EMBL" id="FM178379">
    <property type="protein sequence ID" value="CAQ79898.1"/>
    <property type="molecule type" value="Genomic_DNA"/>
</dbReference>
<dbReference type="RefSeq" id="WP_012550729.1">
    <property type="nucleotide sequence ID" value="NC_011312.1"/>
</dbReference>
<dbReference type="SMR" id="B6EIX3"/>
<dbReference type="KEGG" id="vsa:VSAL_I2213"/>
<dbReference type="eggNOG" id="COG2127">
    <property type="taxonomic scope" value="Bacteria"/>
</dbReference>
<dbReference type="HOGENOM" id="CLU_134358_2_1_6"/>
<dbReference type="Proteomes" id="UP000001730">
    <property type="component" value="Chromosome 1"/>
</dbReference>
<dbReference type="GO" id="GO:0030163">
    <property type="term" value="P:protein catabolic process"/>
    <property type="evidence" value="ECO:0007669"/>
    <property type="project" value="InterPro"/>
</dbReference>
<dbReference type="GO" id="GO:0006508">
    <property type="term" value="P:proteolysis"/>
    <property type="evidence" value="ECO:0007669"/>
    <property type="project" value="UniProtKB-UniRule"/>
</dbReference>
<dbReference type="FunFam" id="3.30.1390.10:FF:000002">
    <property type="entry name" value="ATP-dependent Clp protease adapter protein ClpS"/>
    <property type="match status" value="1"/>
</dbReference>
<dbReference type="Gene3D" id="3.30.1390.10">
    <property type="match status" value="1"/>
</dbReference>
<dbReference type="HAMAP" id="MF_00302">
    <property type="entry name" value="ClpS"/>
    <property type="match status" value="1"/>
</dbReference>
<dbReference type="InterPro" id="IPR022935">
    <property type="entry name" value="ClpS"/>
</dbReference>
<dbReference type="InterPro" id="IPR003769">
    <property type="entry name" value="ClpS_core"/>
</dbReference>
<dbReference type="InterPro" id="IPR014719">
    <property type="entry name" value="Ribosomal_bL12_C/ClpS-like"/>
</dbReference>
<dbReference type="NCBIfam" id="NF000670">
    <property type="entry name" value="PRK00033.1-3"/>
    <property type="match status" value="1"/>
</dbReference>
<dbReference type="NCBIfam" id="NF000672">
    <property type="entry name" value="PRK00033.1-5"/>
    <property type="match status" value="1"/>
</dbReference>
<dbReference type="PANTHER" id="PTHR33473:SF19">
    <property type="entry name" value="ATP-DEPENDENT CLP PROTEASE ADAPTER PROTEIN CLPS"/>
    <property type="match status" value="1"/>
</dbReference>
<dbReference type="PANTHER" id="PTHR33473">
    <property type="entry name" value="ATP-DEPENDENT CLP PROTEASE ADAPTER PROTEIN CLPS1, CHLOROPLASTIC"/>
    <property type="match status" value="1"/>
</dbReference>
<dbReference type="Pfam" id="PF02617">
    <property type="entry name" value="ClpS"/>
    <property type="match status" value="1"/>
</dbReference>
<dbReference type="SUPFAM" id="SSF54736">
    <property type="entry name" value="ClpS-like"/>
    <property type="match status" value="1"/>
</dbReference>
<sequence length="106" mass="12143">MSKFYEWISPDSDVLELEKTGLKPPPMYKVVLNNDDYTPMEFVVEVLDKFFSMDLEKATQLMLTVHYEGKAVCGVFTAEVAETKVAQVNIYSRDNEHPLLCTMEQA</sequence>
<organism>
    <name type="scientific">Aliivibrio salmonicida (strain LFI1238)</name>
    <name type="common">Vibrio salmonicida (strain LFI1238)</name>
    <dbReference type="NCBI Taxonomy" id="316275"/>
    <lineage>
        <taxon>Bacteria</taxon>
        <taxon>Pseudomonadati</taxon>
        <taxon>Pseudomonadota</taxon>
        <taxon>Gammaproteobacteria</taxon>
        <taxon>Vibrionales</taxon>
        <taxon>Vibrionaceae</taxon>
        <taxon>Aliivibrio</taxon>
    </lineage>
</organism>
<reference key="1">
    <citation type="journal article" date="2008" name="BMC Genomics">
        <title>The genome sequence of the fish pathogen Aliivibrio salmonicida strain LFI1238 shows extensive evidence of gene decay.</title>
        <authorList>
            <person name="Hjerde E."/>
            <person name="Lorentzen M.S."/>
            <person name="Holden M.T."/>
            <person name="Seeger K."/>
            <person name="Paulsen S."/>
            <person name="Bason N."/>
            <person name="Churcher C."/>
            <person name="Harris D."/>
            <person name="Norbertczak H."/>
            <person name="Quail M.A."/>
            <person name="Sanders S."/>
            <person name="Thurston S."/>
            <person name="Parkhill J."/>
            <person name="Willassen N.P."/>
            <person name="Thomson N.R."/>
        </authorList>
    </citation>
    <scope>NUCLEOTIDE SEQUENCE [LARGE SCALE GENOMIC DNA]</scope>
    <source>
        <strain>LFI1238</strain>
    </source>
</reference>
<proteinExistence type="inferred from homology"/>
<gene>
    <name evidence="1" type="primary">clpS</name>
    <name type="ordered locus">VSAL_I2213</name>
</gene>
<evidence type="ECO:0000255" key="1">
    <source>
        <dbReference type="HAMAP-Rule" id="MF_00302"/>
    </source>
</evidence>